<proteinExistence type="inferred from homology"/>
<sequence>MADPIMDLFDDTPLFNLDSLPEDAFSQGSSDPVEEALKLALGQVDPPTDPIPDPGVPILSDVVTDPALIPTPVSVPLQNLQTQQLSQIPHEVSVASAPISIQPSLSVASNSSGAATVLLSSSLGVPVSGAQVTPQQQTQQITAVTQQAAGQHAPKIVILKGPQGQTQVLQGVTGATGSPGKVTLARVLTGTPLRPGMAVVSGGTVLNATSPAQGQVKVGTGVQRLVQTANGPMKQVLLTSVPQTQSQVQTQPVQVQIPVQTQLQSPSQPQQLQAQIQAQTQVALQTQAQTQTPTSPAAAGIRPQSVTLSAVPQQVRFVLGSLPGKLVLQGDQLAALAQAKAGQTGAQAKVLTIQLQVQQQPNQQGAKFQLVSGAANAGGSPQVVQISQGQGGQRLAVPLKLLLQPQSNTVSSAGGAVSVVKVINTSAAGSTSGTTTTAASSGVRLAKIQEPVRRVETLCKQEKANRIVAEAIARAKARGERNIPRVLNQDELPAGQTSADLEGAGGATGAKKKGGGGVGGGGGGSKKKSPSAGGAKMVVGGDKKSKAKTPVIPGGGSKSKSKTKLNTITLVGKKRKRNPSSDHSDVDLSPPVSPRTLEEEMSQKRRSNRQVKRKKYTEDLDIKITDDEDELDADVDVTTTPMPAVGHVQPLGAELPPELDGDGLPSMQFFVENPSEEDAAIVDKILSMRVTKKEARQYTNVEEFFVKYKNYSYMHCEWASLEQLERDKRIHQKLKRFKTKQAQMRNLFQEDEEPFNPDYVEVDRILDESHSVDKDNGEPVVYYLVKWCSLPYEDATWELKEDVDEGKVEEFRKIESRQPRLKRTPRPAASAWKKLDESTEYKNGNQLREYQLEGVNWLLFNWYNRQNCILADEMGLGKTIQSIALLSEMFSAGVQSPFMIIAPLSTITNWEREFSNWTDMNAIVYHGSLASRQMIQQYEMYCKDDKGHLIPGAYKFDALITTFEMILSDCPELREISWRCVVIDEAHRLKNRNCKLLDSLKMLEIEHKVLLTGTPLQNTVEELFSLLHFLEPAQFPSEIEFLREFGDLKTEEQVQKLQSILKPMMLRRLKEDVEKNLAPKQETIIEVELTDVQKKYYRAILERNFSFLSMGATQNSNVPNLLNTMMELRKCCNHPYLITGAEEKIVSELREVYDPLAPDFHLQALVRSAGKLVLLDKLLPRLKAGGHKVLIFSQMVRCLDILEDYLIHKRYLYERIDGRVRGNLRQAAIDRFSKPDSDRFVFLLCTRAGGLGINLTAADTCVIFDSDWNPQNDLQAQARCHRIGQSKAVKVYRLITRNSYEREMLDKASLKLGLDRAVLQSMSGNKESSIQQFSKKEIEDLLRKGAYAAIMDENDEGSRFCEEDIDQILQRRATTITIESEGKGSTFSKASFVASENRTDIALDDPEFWQKWAKKADIDMDSLNRKNTLVIDTPRVRKQTRQFSSLRGEGGDLSDLDSDDDYPPHNSRQSRASRRSDRHSGGGYGRTDCFRVEKHLLVYGWGRWRDILSHARCKRRLSERDVETICRVILVFCLIHYRGDENIKSFIWELITPPENGREPQALLNHSGLSIPVPRGRKGKRVKAQSSFDVQKVEWIRKYNPDSLLLDDSYRKHLKHQCNKVLLRVRMLYYLKQEVIGEHADSVLSGADARDIDIWLPEMEQQDVPSGWWDAEADRCLLIGVYKHGYEMYTTMRADPCLCFVERCGRPNEQDINAEQQAADPELGEGGDYDKYSEDPEFKPATRHAKEMYEEGDSVNADGEICVEDRSAPMQVEGPSSGSSDLCYWPTSSSLTARLRRLITAYQRSYRREQLKIEAAEKGDRRRRRCEQATKLKEIARQERQQRWTRREECDFYRVVSTFGVERIKKETDAPEGDEHHMDWNRFRSFARLDKKTDESLTRYFKCFMSMCRKVCHIRPGRGDESQDMSQSLAPITEERASRTLYRVTLLCRLRERVLPHPSLEERLSLAPQTSDLPSWWSIPKHDHELLLAAARHGVSRTELSIFSDPLYSFSQSRLDYLQNQQAQAAAQIHAFSQSQDPAGIKEEGLEDESRLLGVEALCPSDSPAMLLSHSDSKVGIQAGWVWKKSKNNGPSERKLGGGGGGASDSDSDSDSGSSSSSRHSGSSDDSGDSDVEREQAALKMCDGDEENSILSLTPSQEGAPPESLTDPLRVDWPKDRILINRIENLCSLVITGHWPSGRRYISDIQLNTVSDEHELGDDLGYSRVARKINSTLSAEALEGQESEFTVKLLKEEGLKLTFSKQALMPNGEGSARKKRKDHELEDAEGVLHAPRRRDLPNWLKENPDYEVEGDMLELLVNRTKRKRRRKRVEKGAALTGSERVKVIDIRTGKKFAGVFGPALQDLREHLEENPDHAVAPEWSETVRHSGFLPEILFHRLLSPHASIPKKSRHYLHTPSLQTDDPLLGGGEGEMLVSDGAYMMDDEDLEDGGHLTSSHHFLTPAYDVKMEPSALDMDGGDSLSQGGYDSSDREAILDDVIMAPKHSDTSSSSED</sequence>
<organism>
    <name type="scientific">Danio rerio</name>
    <name type="common">Zebrafish</name>
    <name type="synonym">Brachydanio rerio</name>
    <dbReference type="NCBI Taxonomy" id="7955"/>
    <lineage>
        <taxon>Eukaryota</taxon>
        <taxon>Metazoa</taxon>
        <taxon>Chordata</taxon>
        <taxon>Craniata</taxon>
        <taxon>Vertebrata</taxon>
        <taxon>Euteleostomi</taxon>
        <taxon>Actinopterygii</taxon>
        <taxon>Neopterygii</taxon>
        <taxon>Teleostei</taxon>
        <taxon>Ostariophysi</taxon>
        <taxon>Cypriniformes</taxon>
        <taxon>Danionidae</taxon>
        <taxon>Danioninae</taxon>
        <taxon>Danio</taxon>
    </lineage>
</organism>
<keyword id="KW-0010">Activator</keyword>
<keyword id="KW-0067">ATP-binding</keyword>
<keyword id="KW-0156">Chromatin regulator</keyword>
<keyword id="KW-0238">DNA-binding</keyword>
<keyword id="KW-0378">Hydrolase</keyword>
<keyword id="KW-0547">Nucleotide-binding</keyword>
<keyword id="KW-0539">Nucleus</keyword>
<keyword id="KW-1185">Reference proteome</keyword>
<keyword id="KW-0677">Repeat</keyword>
<keyword id="KW-0678">Repressor</keyword>
<keyword id="KW-0804">Transcription</keyword>
<keyword id="KW-0805">Transcription regulation</keyword>
<keyword id="KW-0879">Wnt signaling pathway</keyword>
<reference key="1">
    <citation type="journal article" date="2013" name="Nature">
        <title>The zebrafish reference genome sequence and its relationship to the human genome.</title>
        <authorList>
            <person name="Howe K."/>
            <person name="Clark M.D."/>
            <person name="Torroja C.F."/>
            <person name="Torrance J."/>
            <person name="Berthelot C."/>
            <person name="Muffato M."/>
            <person name="Collins J.E."/>
            <person name="Humphray S."/>
            <person name="McLaren K."/>
            <person name="Matthews L."/>
            <person name="McLaren S."/>
            <person name="Sealy I."/>
            <person name="Caccamo M."/>
            <person name="Churcher C."/>
            <person name="Scott C."/>
            <person name="Barrett J.C."/>
            <person name="Koch R."/>
            <person name="Rauch G.J."/>
            <person name="White S."/>
            <person name="Chow W."/>
            <person name="Kilian B."/>
            <person name="Quintais L.T."/>
            <person name="Guerra-Assuncao J.A."/>
            <person name="Zhou Y."/>
            <person name="Gu Y."/>
            <person name="Yen J."/>
            <person name="Vogel J.H."/>
            <person name="Eyre T."/>
            <person name="Redmond S."/>
            <person name="Banerjee R."/>
            <person name="Chi J."/>
            <person name="Fu B."/>
            <person name="Langley E."/>
            <person name="Maguire S.F."/>
            <person name="Laird G.K."/>
            <person name="Lloyd D."/>
            <person name="Kenyon E."/>
            <person name="Donaldson S."/>
            <person name="Sehra H."/>
            <person name="Almeida-King J."/>
            <person name="Loveland J."/>
            <person name="Trevanion S."/>
            <person name="Jones M."/>
            <person name="Quail M."/>
            <person name="Willey D."/>
            <person name="Hunt A."/>
            <person name="Burton J."/>
            <person name="Sims S."/>
            <person name="McLay K."/>
            <person name="Plumb B."/>
            <person name="Davis J."/>
            <person name="Clee C."/>
            <person name="Oliver K."/>
            <person name="Clark R."/>
            <person name="Riddle C."/>
            <person name="Elliot D."/>
            <person name="Threadgold G."/>
            <person name="Harden G."/>
            <person name="Ware D."/>
            <person name="Begum S."/>
            <person name="Mortimore B."/>
            <person name="Kerry G."/>
            <person name="Heath P."/>
            <person name="Phillimore B."/>
            <person name="Tracey A."/>
            <person name="Corby N."/>
            <person name="Dunn M."/>
            <person name="Johnson C."/>
            <person name="Wood J."/>
            <person name="Clark S."/>
            <person name="Pelan S."/>
            <person name="Griffiths G."/>
            <person name="Smith M."/>
            <person name="Glithero R."/>
            <person name="Howden P."/>
            <person name="Barker N."/>
            <person name="Lloyd C."/>
            <person name="Stevens C."/>
            <person name="Harley J."/>
            <person name="Holt K."/>
            <person name="Panagiotidis G."/>
            <person name="Lovell J."/>
            <person name="Beasley H."/>
            <person name="Henderson C."/>
            <person name="Gordon D."/>
            <person name="Auger K."/>
            <person name="Wright D."/>
            <person name="Collins J."/>
            <person name="Raisen C."/>
            <person name="Dyer L."/>
            <person name="Leung K."/>
            <person name="Robertson L."/>
            <person name="Ambridge K."/>
            <person name="Leongamornlert D."/>
            <person name="McGuire S."/>
            <person name="Gilderthorp R."/>
            <person name="Griffiths C."/>
            <person name="Manthravadi D."/>
            <person name="Nichol S."/>
            <person name="Barker G."/>
            <person name="Whitehead S."/>
            <person name="Kay M."/>
            <person name="Brown J."/>
            <person name="Murnane C."/>
            <person name="Gray E."/>
            <person name="Humphries M."/>
            <person name="Sycamore N."/>
            <person name="Barker D."/>
            <person name="Saunders D."/>
            <person name="Wallis J."/>
            <person name="Babbage A."/>
            <person name="Hammond S."/>
            <person name="Mashreghi-Mohammadi M."/>
            <person name="Barr L."/>
            <person name="Martin S."/>
            <person name="Wray P."/>
            <person name="Ellington A."/>
            <person name="Matthews N."/>
            <person name="Ellwood M."/>
            <person name="Woodmansey R."/>
            <person name="Clark G."/>
            <person name="Cooper J."/>
            <person name="Tromans A."/>
            <person name="Grafham D."/>
            <person name="Skuce C."/>
            <person name="Pandian R."/>
            <person name="Andrews R."/>
            <person name="Harrison E."/>
            <person name="Kimberley A."/>
            <person name="Garnett J."/>
            <person name="Fosker N."/>
            <person name="Hall R."/>
            <person name="Garner P."/>
            <person name="Kelly D."/>
            <person name="Bird C."/>
            <person name="Palmer S."/>
            <person name="Gehring I."/>
            <person name="Berger A."/>
            <person name="Dooley C.M."/>
            <person name="Ersan-Urun Z."/>
            <person name="Eser C."/>
            <person name="Geiger H."/>
            <person name="Geisler M."/>
            <person name="Karotki L."/>
            <person name="Kirn A."/>
            <person name="Konantz J."/>
            <person name="Konantz M."/>
            <person name="Oberlander M."/>
            <person name="Rudolph-Geiger S."/>
            <person name="Teucke M."/>
            <person name="Lanz C."/>
            <person name="Raddatz G."/>
            <person name="Osoegawa K."/>
            <person name="Zhu B."/>
            <person name="Rapp A."/>
            <person name="Widaa S."/>
            <person name="Langford C."/>
            <person name="Yang F."/>
            <person name="Schuster S.C."/>
            <person name="Carter N.P."/>
            <person name="Harrow J."/>
            <person name="Ning Z."/>
            <person name="Herrero J."/>
            <person name="Searle S.M."/>
            <person name="Enright A."/>
            <person name="Geisler R."/>
            <person name="Plasterk R.H."/>
            <person name="Lee C."/>
            <person name="Westerfield M."/>
            <person name="de Jong P.J."/>
            <person name="Zon L.I."/>
            <person name="Postlethwait J.H."/>
            <person name="Nusslein-Volhard C."/>
            <person name="Hubbard T.J."/>
            <person name="Roest Crollius H."/>
            <person name="Rogers J."/>
            <person name="Stemple D.L."/>
        </authorList>
    </citation>
    <scope>NUCLEOTIDE SEQUENCE [LARGE SCALE GENOMIC DNA]</scope>
    <source>
        <strain>Tuebingen</strain>
    </source>
</reference>
<comment type="function">
    <text evidence="1">ATP-dependent chromatin-remodeling factor, it slides nucleosomes along DNA; nucleosome sliding requires ATP. Acts as a transcription repressor by remodeling chromatin structure and recruiting histone H1 to target genes. Suppresses p53/tp53-mediated apoptosis by recruiting histone H1 and preventing p53/tp53 transactivation activity. Acts as a negative regulator of Wnt signaling pathway by regulating beta-catenin (ctnnb1) activity. Negatively regulates ctnnb1-targeted gene expression by being recruited specifically to the promoter regions of several ctnnb1 responsive genes. May also act as a transcription activator by participating in efficient U6 RNA polymerase III transcription.</text>
</comment>
<comment type="catalytic activity">
    <reaction evidence="1">
        <text>ATP + H2O = ADP + phosphate + H(+)</text>
        <dbReference type="Rhea" id="RHEA:13065"/>
        <dbReference type="ChEBI" id="CHEBI:15377"/>
        <dbReference type="ChEBI" id="CHEBI:15378"/>
        <dbReference type="ChEBI" id="CHEBI:30616"/>
        <dbReference type="ChEBI" id="CHEBI:43474"/>
        <dbReference type="ChEBI" id="CHEBI:456216"/>
    </reaction>
</comment>
<comment type="subunit">
    <text evidence="1">Component of some MLL1/MLL complex.</text>
</comment>
<comment type="subcellular location">
    <subcellularLocation>
        <location evidence="1">Nucleus</location>
    </subcellularLocation>
</comment>
<comment type="similarity">
    <text evidence="1">Belongs to the SNF2/RAD54 helicase family. CHD8 subfamily.</text>
</comment>
<comment type="sequence caution" evidence="3">
    <conflict type="erroneous gene model prediction">
        <sequence resource="EMBL-CDS" id="CAQ13521"/>
    </conflict>
</comment>
<name>CHD8_DANRE</name>
<evidence type="ECO:0000255" key="1">
    <source>
        <dbReference type="HAMAP-Rule" id="MF_03071"/>
    </source>
</evidence>
<evidence type="ECO:0000256" key="2">
    <source>
        <dbReference type="SAM" id="MobiDB-lite"/>
    </source>
</evidence>
<evidence type="ECO:0000305" key="3"/>
<protein>
    <recommendedName>
        <fullName evidence="1">Chromodomain-helicase-DNA-binding protein 8</fullName>
        <shortName evidence="1">CHD-8</shortName>
        <ecNumber evidence="1">3.6.4.-</ecNumber>
    </recommendedName>
    <alternativeName>
        <fullName evidence="1">ATP-dependent helicase CHD8</fullName>
    </alternativeName>
</protein>
<gene>
    <name evidence="1" type="primary">chd8</name>
    <name type="ORF">si:ch211-10e2.6</name>
    <name type="ORF">wu:fi45h08</name>
</gene>
<accession>B0R0I6</accession>
<feature type="chain" id="PRO_0000367312" description="Chromodomain-helicase-DNA-binding protein 8">
    <location>
        <begin position="1"/>
        <end position="2511"/>
    </location>
</feature>
<feature type="domain" description="Chromo 1" evidence="1">
    <location>
        <begin position="680"/>
        <end position="745"/>
    </location>
</feature>
<feature type="domain" description="Chromo 2" evidence="1">
    <location>
        <begin position="760"/>
        <end position="826"/>
    </location>
</feature>
<feature type="domain" description="Helicase ATP-binding" evidence="1">
    <location>
        <begin position="859"/>
        <end position="1033"/>
    </location>
</feature>
<feature type="domain" description="Helicase C-terminal" evidence="1">
    <location>
        <begin position="1174"/>
        <end position="1330"/>
    </location>
</feature>
<feature type="region of interest" description="Disordered" evidence="2">
    <location>
        <begin position="484"/>
        <end position="615"/>
    </location>
</feature>
<feature type="region of interest" description="Disordered" evidence="2">
    <location>
        <begin position="1440"/>
        <end position="1482"/>
    </location>
</feature>
<feature type="region of interest" description="Disordered" evidence="2">
    <location>
        <begin position="1715"/>
        <end position="1736"/>
    </location>
</feature>
<feature type="region of interest" description="Disordered" evidence="2">
    <location>
        <begin position="2086"/>
        <end position="2168"/>
    </location>
</feature>
<feature type="region of interest" description="Disordered" evidence="2">
    <location>
        <begin position="2468"/>
        <end position="2511"/>
    </location>
</feature>
<feature type="short sequence motif" description="DEAH box" evidence="1">
    <location>
        <begin position="984"/>
        <end position="987"/>
    </location>
</feature>
<feature type="compositionally biased region" description="Gly residues" evidence="2">
    <location>
        <begin position="515"/>
        <end position="524"/>
    </location>
</feature>
<feature type="compositionally biased region" description="Basic residues" evidence="2">
    <location>
        <begin position="604"/>
        <end position="615"/>
    </location>
</feature>
<feature type="compositionally biased region" description="Acidic residues" evidence="2">
    <location>
        <begin position="1452"/>
        <end position="1461"/>
    </location>
</feature>
<feature type="compositionally biased region" description="Low complexity" evidence="2">
    <location>
        <begin position="2111"/>
        <end position="2125"/>
    </location>
</feature>
<feature type="binding site" evidence="1">
    <location>
        <begin position="872"/>
        <end position="879"/>
    </location>
    <ligand>
        <name>ATP</name>
        <dbReference type="ChEBI" id="CHEBI:30616"/>
    </ligand>
</feature>
<dbReference type="EC" id="3.6.4.-" evidence="1"/>
<dbReference type="EMBL" id="AL928674">
    <property type="protein sequence ID" value="CAQ13521.1"/>
    <property type="status" value="ALT_SEQ"/>
    <property type="molecule type" value="Genomic_DNA"/>
</dbReference>
<dbReference type="SMR" id="B0R0I6"/>
<dbReference type="FunCoup" id="B0R0I6">
    <property type="interactions" value="1832"/>
</dbReference>
<dbReference type="STRING" id="7955.ENSDARP00000011455"/>
<dbReference type="PaxDb" id="7955-ENSDARP00000122217"/>
<dbReference type="PeptideAtlas" id="B0R0I6"/>
<dbReference type="AGR" id="ZFIN:ZDB-GENE-030131-6320"/>
<dbReference type="ZFIN" id="ZDB-GENE-030131-6320">
    <property type="gene designation" value="chd8"/>
</dbReference>
<dbReference type="eggNOG" id="KOG0384">
    <property type="taxonomic scope" value="Eukaryota"/>
</dbReference>
<dbReference type="InParanoid" id="B0R0I6"/>
<dbReference type="PhylomeDB" id="B0R0I6"/>
<dbReference type="Reactome" id="R-DRE-3769402">
    <property type="pathway name" value="Deactivation of the beta-catenin transactivating complex"/>
</dbReference>
<dbReference type="PRO" id="PR:B0R0I6"/>
<dbReference type="Proteomes" id="UP000000437">
    <property type="component" value="Unplaced"/>
</dbReference>
<dbReference type="GO" id="GO:0000785">
    <property type="term" value="C:chromatin"/>
    <property type="evidence" value="ECO:0000318"/>
    <property type="project" value="GO_Central"/>
</dbReference>
<dbReference type="GO" id="GO:0071339">
    <property type="term" value="C:MLL1 complex"/>
    <property type="evidence" value="ECO:0000250"/>
    <property type="project" value="UniProtKB"/>
</dbReference>
<dbReference type="GO" id="GO:0005634">
    <property type="term" value="C:nucleus"/>
    <property type="evidence" value="ECO:0000250"/>
    <property type="project" value="UniProtKB"/>
</dbReference>
<dbReference type="GO" id="GO:0005524">
    <property type="term" value="F:ATP binding"/>
    <property type="evidence" value="ECO:0007669"/>
    <property type="project" value="UniProtKB-UniRule"/>
</dbReference>
<dbReference type="GO" id="GO:0016887">
    <property type="term" value="F:ATP hydrolysis activity"/>
    <property type="evidence" value="ECO:0000318"/>
    <property type="project" value="GO_Central"/>
</dbReference>
<dbReference type="GO" id="GO:0140658">
    <property type="term" value="F:ATP-dependent chromatin remodeler activity"/>
    <property type="evidence" value="ECO:0000318"/>
    <property type="project" value="GO_Central"/>
</dbReference>
<dbReference type="GO" id="GO:0008013">
    <property type="term" value="F:beta-catenin binding"/>
    <property type="evidence" value="ECO:0007669"/>
    <property type="project" value="UniProtKB-UniRule"/>
</dbReference>
<dbReference type="GO" id="GO:0003682">
    <property type="term" value="F:chromatin binding"/>
    <property type="evidence" value="ECO:0000318"/>
    <property type="project" value="GO_Central"/>
</dbReference>
<dbReference type="GO" id="GO:0003677">
    <property type="term" value="F:DNA binding"/>
    <property type="evidence" value="ECO:0000318"/>
    <property type="project" value="GO_Central"/>
</dbReference>
<dbReference type="GO" id="GO:0003678">
    <property type="term" value="F:DNA helicase activity"/>
    <property type="evidence" value="ECO:0007669"/>
    <property type="project" value="UniProtKB-UniRule"/>
</dbReference>
<dbReference type="GO" id="GO:0042393">
    <property type="term" value="F:histone binding"/>
    <property type="evidence" value="ECO:0000318"/>
    <property type="project" value="GO_Central"/>
</dbReference>
<dbReference type="GO" id="GO:0002039">
    <property type="term" value="F:p53 binding"/>
    <property type="evidence" value="ECO:0007669"/>
    <property type="project" value="UniProtKB-UniRule"/>
</dbReference>
<dbReference type="GO" id="GO:0007420">
    <property type="term" value="P:brain development"/>
    <property type="evidence" value="ECO:0000315"/>
    <property type="project" value="GO_Central"/>
</dbReference>
<dbReference type="GO" id="GO:0006338">
    <property type="term" value="P:chromatin remodeling"/>
    <property type="evidence" value="ECO:0000318"/>
    <property type="project" value="GO_Central"/>
</dbReference>
<dbReference type="GO" id="GO:0048565">
    <property type="term" value="P:digestive tract development"/>
    <property type="evidence" value="ECO:0000318"/>
    <property type="project" value="GO_Central"/>
</dbReference>
<dbReference type="GO" id="GO:0048546">
    <property type="term" value="P:digestive tract morphogenesis"/>
    <property type="evidence" value="ECO:0000315"/>
    <property type="project" value="ZFIN"/>
</dbReference>
<dbReference type="GO" id="GO:0048484">
    <property type="term" value="P:enteric nervous system development"/>
    <property type="evidence" value="ECO:0000315"/>
    <property type="project" value="GO_Central"/>
</dbReference>
<dbReference type="GO" id="GO:0030900">
    <property type="term" value="P:forebrain development"/>
    <property type="evidence" value="ECO:0000315"/>
    <property type="project" value="GO_Central"/>
</dbReference>
<dbReference type="GO" id="GO:0060322">
    <property type="term" value="P:head development"/>
    <property type="evidence" value="ECO:0000315"/>
    <property type="project" value="ZFIN"/>
</dbReference>
<dbReference type="GO" id="GO:0060729">
    <property type="term" value="P:intestinal epithelial structure maintenance"/>
    <property type="evidence" value="ECO:0000315"/>
    <property type="project" value="ZFIN"/>
</dbReference>
<dbReference type="GO" id="GO:0030901">
    <property type="term" value="P:midbrain development"/>
    <property type="evidence" value="ECO:0000315"/>
    <property type="project" value="GO_Central"/>
</dbReference>
<dbReference type="GO" id="GO:0043066">
    <property type="term" value="P:negative regulation of apoptotic process"/>
    <property type="evidence" value="ECO:0007669"/>
    <property type="project" value="UniProtKB-UniRule"/>
</dbReference>
<dbReference type="GO" id="GO:0090090">
    <property type="term" value="P:negative regulation of canonical Wnt signaling pathway"/>
    <property type="evidence" value="ECO:0000318"/>
    <property type="project" value="GO_Central"/>
</dbReference>
<dbReference type="GO" id="GO:0045892">
    <property type="term" value="P:negative regulation of DNA-templated transcription"/>
    <property type="evidence" value="ECO:0000318"/>
    <property type="project" value="GO_Central"/>
</dbReference>
<dbReference type="GO" id="GO:2000178">
    <property type="term" value="P:negative regulation of neural precursor cell proliferation"/>
    <property type="evidence" value="ECO:0000315"/>
    <property type="project" value="GO_Central"/>
</dbReference>
<dbReference type="GO" id="GO:0001755">
    <property type="term" value="P:neural crest cell migration"/>
    <property type="evidence" value="ECO:0000315"/>
    <property type="project" value="ZFIN"/>
</dbReference>
<dbReference type="GO" id="GO:0045893">
    <property type="term" value="P:positive regulation of DNA-templated transcription"/>
    <property type="evidence" value="ECO:0007669"/>
    <property type="project" value="UniProtKB-UniRule"/>
</dbReference>
<dbReference type="GO" id="GO:0016055">
    <property type="term" value="P:Wnt signaling pathway"/>
    <property type="evidence" value="ECO:0007669"/>
    <property type="project" value="UniProtKB-KW"/>
</dbReference>
<dbReference type="CDD" id="cd18668">
    <property type="entry name" value="CD1_tandem_CHD5-9_like"/>
    <property type="match status" value="1"/>
</dbReference>
<dbReference type="CDD" id="cd18663">
    <property type="entry name" value="CD2_tandem_CHD5-9_like"/>
    <property type="match status" value="1"/>
</dbReference>
<dbReference type="CDD" id="cd18060">
    <property type="entry name" value="DEXHc_CHD8"/>
    <property type="match status" value="1"/>
</dbReference>
<dbReference type="CDD" id="cd18793">
    <property type="entry name" value="SF2_C_SNF"/>
    <property type="match status" value="1"/>
</dbReference>
<dbReference type="FunFam" id="2.40.50.40:FF:000001">
    <property type="entry name" value="chromodomain-helicase-DNA-binding protein 8 isoform X4"/>
    <property type="match status" value="1"/>
</dbReference>
<dbReference type="FunFam" id="3.40.50.10810:FF:000003">
    <property type="entry name" value="chromodomain-helicase-DNA-binding protein 8 isoform X4"/>
    <property type="match status" value="1"/>
</dbReference>
<dbReference type="FunFam" id="3.40.50.300:FF:000015">
    <property type="entry name" value="chromodomain-helicase-DNA-binding protein 9 isoform X1"/>
    <property type="match status" value="1"/>
</dbReference>
<dbReference type="Gene3D" id="2.40.50.40">
    <property type="match status" value="2"/>
</dbReference>
<dbReference type="Gene3D" id="3.40.5.120">
    <property type="match status" value="2"/>
</dbReference>
<dbReference type="Gene3D" id="1.10.10.60">
    <property type="entry name" value="Homeodomain-like"/>
    <property type="match status" value="1"/>
</dbReference>
<dbReference type="Gene3D" id="3.40.50.300">
    <property type="entry name" value="P-loop containing nucleotide triphosphate hydrolases"/>
    <property type="match status" value="1"/>
</dbReference>
<dbReference type="Gene3D" id="3.40.50.10810">
    <property type="entry name" value="Tandem AAA-ATPase domain"/>
    <property type="match status" value="1"/>
</dbReference>
<dbReference type="HAMAP" id="MF_03071">
    <property type="entry name" value="CHD8"/>
    <property type="match status" value="1"/>
</dbReference>
<dbReference type="InterPro" id="IPR006576">
    <property type="entry name" value="BRK_domain"/>
</dbReference>
<dbReference type="InterPro" id="IPR037259">
    <property type="entry name" value="BRK_sf"/>
</dbReference>
<dbReference type="InterPro" id="IPR051493">
    <property type="entry name" value="CHD"/>
</dbReference>
<dbReference type="InterPro" id="IPR034724">
    <property type="entry name" value="CHD8"/>
</dbReference>
<dbReference type="InterPro" id="IPR016197">
    <property type="entry name" value="Chromo-like_dom_sf"/>
</dbReference>
<dbReference type="InterPro" id="IPR000953">
    <property type="entry name" value="Chromo/chromo_shadow_dom"/>
</dbReference>
<dbReference type="InterPro" id="IPR023780">
    <property type="entry name" value="Chromo_domain"/>
</dbReference>
<dbReference type="InterPro" id="IPR014001">
    <property type="entry name" value="Helicase_ATP-bd"/>
</dbReference>
<dbReference type="InterPro" id="IPR001650">
    <property type="entry name" value="Helicase_C-like"/>
</dbReference>
<dbReference type="InterPro" id="IPR056342">
    <property type="entry name" value="HTH_CHD6-9"/>
</dbReference>
<dbReference type="InterPro" id="IPR027417">
    <property type="entry name" value="P-loop_NTPase"/>
</dbReference>
<dbReference type="InterPro" id="IPR038718">
    <property type="entry name" value="SNF2-like_sf"/>
</dbReference>
<dbReference type="InterPro" id="IPR049730">
    <property type="entry name" value="SNF2/RAD54-like_C"/>
</dbReference>
<dbReference type="InterPro" id="IPR000330">
    <property type="entry name" value="SNF2_N"/>
</dbReference>
<dbReference type="PANTHER" id="PTHR46850">
    <property type="entry name" value="CHROMODOMAIN-HELICASE-DNA-BINDING PROTEIN 9"/>
    <property type="match status" value="1"/>
</dbReference>
<dbReference type="PANTHER" id="PTHR46850:SF1">
    <property type="entry name" value="CHROMODOMAIN-HELICASE-DNA-BINDING PROTEIN 9"/>
    <property type="match status" value="1"/>
</dbReference>
<dbReference type="Pfam" id="PF07533">
    <property type="entry name" value="BRK"/>
    <property type="match status" value="1"/>
</dbReference>
<dbReference type="Pfam" id="PF00385">
    <property type="entry name" value="Chromo"/>
    <property type="match status" value="2"/>
</dbReference>
<dbReference type="Pfam" id="PF00271">
    <property type="entry name" value="Helicase_C"/>
    <property type="match status" value="1"/>
</dbReference>
<dbReference type="Pfam" id="PF23078">
    <property type="entry name" value="HTH_CHD6-9"/>
    <property type="match status" value="1"/>
</dbReference>
<dbReference type="Pfam" id="PF00176">
    <property type="entry name" value="SNF2-rel_dom"/>
    <property type="match status" value="1"/>
</dbReference>
<dbReference type="SMART" id="SM00592">
    <property type="entry name" value="BRK"/>
    <property type="match status" value="2"/>
</dbReference>
<dbReference type="SMART" id="SM00298">
    <property type="entry name" value="CHROMO"/>
    <property type="match status" value="2"/>
</dbReference>
<dbReference type="SMART" id="SM00487">
    <property type="entry name" value="DEXDc"/>
    <property type="match status" value="1"/>
</dbReference>
<dbReference type="SMART" id="SM00490">
    <property type="entry name" value="HELICc"/>
    <property type="match status" value="1"/>
</dbReference>
<dbReference type="SUPFAM" id="SSF160481">
    <property type="entry name" value="BRK domain-like"/>
    <property type="match status" value="2"/>
</dbReference>
<dbReference type="SUPFAM" id="SSF54160">
    <property type="entry name" value="Chromo domain-like"/>
    <property type="match status" value="2"/>
</dbReference>
<dbReference type="SUPFAM" id="SSF52540">
    <property type="entry name" value="P-loop containing nucleoside triphosphate hydrolases"/>
    <property type="match status" value="2"/>
</dbReference>
<dbReference type="PROSITE" id="PS50013">
    <property type="entry name" value="CHROMO_2"/>
    <property type="match status" value="2"/>
</dbReference>
<dbReference type="PROSITE" id="PS51192">
    <property type="entry name" value="HELICASE_ATP_BIND_1"/>
    <property type="match status" value="1"/>
</dbReference>
<dbReference type="PROSITE" id="PS51194">
    <property type="entry name" value="HELICASE_CTER"/>
    <property type="match status" value="1"/>
</dbReference>